<gene>
    <name evidence="1" type="primary">recA</name>
    <name type="ordered locus">EcHS_A2835</name>
</gene>
<accession>A8A3H6</accession>
<proteinExistence type="inferred from homology"/>
<keyword id="KW-0067">ATP-binding</keyword>
<keyword id="KW-0963">Cytoplasm</keyword>
<keyword id="KW-0227">DNA damage</keyword>
<keyword id="KW-0233">DNA recombination</keyword>
<keyword id="KW-0234">DNA repair</keyword>
<keyword id="KW-0238">DNA-binding</keyword>
<keyword id="KW-0547">Nucleotide-binding</keyword>
<keyword id="KW-0742">SOS response</keyword>
<protein>
    <recommendedName>
        <fullName evidence="1">Protein RecA</fullName>
    </recommendedName>
    <alternativeName>
        <fullName evidence="1">Recombinase A</fullName>
    </alternativeName>
</protein>
<name>RECA_ECOHS</name>
<reference key="1">
    <citation type="journal article" date="2008" name="J. Bacteriol.">
        <title>The pangenome structure of Escherichia coli: comparative genomic analysis of E. coli commensal and pathogenic isolates.</title>
        <authorList>
            <person name="Rasko D.A."/>
            <person name="Rosovitz M.J."/>
            <person name="Myers G.S.A."/>
            <person name="Mongodin E.F."/>
            <person name="Fricke W.F."/>
            <person name="Gajer P."/>
            <person name="Crabtree J."/>
            <person name="Sebaihia M."/>
            <person name="Thomson N.R."/>
            <person name="Chaudhuri R."/>
            <person name="Henderson I.R."/>
            <person name="Sperandio V."/>
            <person name="Ravel J."/>
        </authorList>
    </citation>
    <scope>NUCLEOTIDE SEQUENCE [LARGE SCALE GENOMIC DNA]</scope>
    <source>
        <strain>HS</strain>
    </source>
</reference>
<comment type="function">
    <text evidence="1">Can catalyze the hydrolysis of ATP in the presence of single-stranded DNA, the ATP-dependent uptake of single-stranded DNA by duplex DNA, and the ATP-dependent hybridization of homologous single-stranded DNAs. It interacts with LexA causing its activation and leading to its autocatalytic cleavage.</text>
</comment>
<comment type="subcellular location">
    <subcellularLocation>
        <location evidence="1">Cytoplasm</location>
    </subcellularLocation>
</comment>
<comment type="similarity">
    <text evidence="1">Belongs to the RecA family.</text>
</comment>
<feature type="chain" id="PRO_1000059125" description="Protein RecA">
    <location>
        <begin position="1"/>
        <end position="353"/>
    </location>
</feature>
<feature type="region of interest" description="Disordered" evidence="2">
    <location>
        <begin position="330"/>
        <end position="353"/>
    </location>
</feature>
<feature type="compositionally biased region" description="Acidic residues" evidence="2">
    <location>
        <begin position="339"/>
        <end position="353"/>
    </location>
</feature>
<feature type="binding site" evidence="1">
    <location>
        <begin position="67"/>
        <end position="74"/>
    </location>
    <ligand>
        <name>ATP</name>
        <dbReference type="ChEBI" id="CHEBI:30616"/>
    </ligand>
</feature>
<dbReference type="EMBL" id="CP000802">
    <property type="protein sequence ID" value="ABV07080.1"/>
    <property type="molecule type" value="Genomic_DNA"/>
</dbReference>
<dbReference type="RefSeq" id="WP_000963143.1">
    <property type="nucleotide sequence ID" value="NC_009800.1"/>
</dbReference>
<dbReference type="SMR" id="A8A3H6"/>
<dbReference type="GeneID" id="93779312"/>
<dbReference type="KEGG" id="ecx:EcHS_A2835"/>
<dbReference type="HOGENOM" id="CLU_040469_3_2_6"/>
<dbReference type="GO" id="GO:0005829">
    <property type="term" value="C:cytosol"/>
    <property type="evidence" value="ECO:0007669"/>
    <property type="project" value="TreeGrafter"/>
</dbReference>
<dbReference type="GO" id="GO:0005524">
    <property type="term" value="F:ATP binding"/>
    <property type="evidence" value="ECO:0007669"/>
    <property type="project" value="UniProtKB-UniRule"/>
</dbReference>
<dbReference type="GO" id="GO:0016887">
    <property type="term" value="F:ATP hydrolysis activity"/>
    <property type="evidence" value="ECO:0007669"/>
    <property type="project" value="InterPro"/>
</dbReference>
<dbReference type="GO" id="GO:0140664">
    <property type="term" value="F:ATP-dependent DNA damage sensor activity"/>
    <property type="evidence" value="ECO:0007669"/>
    <property type="project" value="InterPro"/>
</dbReference>
<dbReference type="GO" id="GO:0003684">
    <property type="term" value="F:damaged DNA binding"/>
    <property type="evidence" value="ECO:0007669"/>
    <property type="project" value="UniProtKB-UniRule"/>
</dbReference>
<dbReference type="GO" id="GO:0003697">
    <property type="term" value="F:single-stranded DNA binding"/>
    <property type="evidence" value="ECO:0007669"/>
    <property type="project" value="UniProtKB-UniRule"/>
</dbReference>
<dbReference type="GO" id="GO:0006310">
    <property type="term" value="P:DNA recombination"/>
    <property type="evidence" value="ECO:0007669"/>
    <property type="project" value="UniProtKB-UniRule"/>
</dbReference>
<dbReference type="GO" id="GO:0006281">
    <property type="term" value="P:DNA repair"/>
    <property type="evidence" value="ECO:0007669"/>
    <property type="project" value="UniProtKB-UniRule"/>
</dbReference>
<dbReference type="GO" id="GO:0009432">
    <property type="term" value="P:SOS response"/>
    <property type="evidence" value="ECO:0007669"/>
    <property type="project" value="UniProtKB-UniRule"/>
</dbReference>
<dbReference type="CDD" id="cd00983">
    <property type="entry name" value="RecA"/>
    <property type="match status" value="1"/>
</dbReference>
<dbReference type="FunFam" id="3.40.50.300:FF:000087">
    <property type="entry name" value="Recombinase RecA"/>
    <property type="match status" value="1"/>
</dbReference>
<dbReference type="Gene3D" id="3.40.50.300">
    <property type="entry name" value="P-loop containing nucleotide triphosphate hydrolases"/>
    <property type="match status" value="1"/>
</dbReference>
<dbReference type="HAMAP" id="MF_00268">
    <property type="entry name" value="RecA"/>
    <property type="match status" value="1"/>
</dbReference>
<dbReference type="InterPro" id="IPR003593">
    <property type="entry name" value="AAA+_ATPase"/>
</dbReference>
<dbReference type="InterPro" id="IPR013765">
    <property type="entry name" value="DNA_recomb/repair_RecA"/>
</dbReference>
<dbReference type="InterPro" id="IPR020584">
    <property type="entry name" value="DNA_recomb/repair_RecA_CS"/>
</dbReference>
<dbReference type="InterPro" id="IPR027417">
    <property type="entry name" value="P-loop_NTPase"/>
</dbReference>
<dbReference type="InterPro" id="IPR049261">
    <property type="entry name" value="RecA-like_C"/>
</dbReference>
<dbReference type="InterPro" id="IPR049428">
    <property type="entry name" value="RecA-like_N"/>
</dbReference>
<dbReference type="InterPro" id="IPR020588">
    <property type="entry name" value="RecA_ATP-bd"/>
</dbReference>
<dbReference type="InterPro" id="IPR023400">
    <property type="entry name" value="RecA_C_sf"/>
</dbReference>
<dbReference type="InterPro" id="IPR020587">
    <property type="entry name" value="RecA_monomer-monomer_interface"/>
</dbReference>
<dbReference type="NCBIfam" id="TIGR02012">
    <property type="entry name" value="tigrfam_recA"/>
    <property type="match status" value="1"/>
</dbReference>
<dbReference type="PANTHER" id="PTHR45900:SF1">
    <property type="entry name" value="MITOCHONDRIAL DNA REPAIR PROTEIN RECA HOMOLOG-RELATED"/>
    <property type="match status" value="1"/>
</dbReference>
<dbReference type="PANTHER" id="PTHR45900">
    <property type="entry name" value="RECA"/>
    <property type="match status" value="1"/>
</dbReference>
<dbReference type="Pfam" id="PF00154">
    <property type="entry name" value="RecA"/>
    <property type="match status" value="1"/>
</dbReference>
<dbReference type="Pfam" id="PF21096">
    <property type="entry name" value="RecA_C"/>
    <property type="match status" value="1"/>
</dbReference>
<dbReference type="PRINTS" id="PR00142">
    <property type="entry name" value="RECA"/>
</dbReference>
<dbReference type="SMART" id="SM00382">
    <property type="entry name" value="AAA"/>
    <property type="match status" value="1"/>
</dbReference>
<dbReference type="SUPFAM" id="SSF52540">
    <property type="entry name" value="P-loop containing nucleoside triphosphate hydrolases"/>
    <property type="match status" value="1"/>
</dbReference>
<dbReference type="SUPFAM" id="SSF54752">
    <property type="entry name" value="RecA protein, C-terminal domain"/>
    <property type="match status" value="1"/>
</dbReference>
<dbReference type="PROSITE" id="PS00321">
    <property type="entry name" value="RECA_1"/>
    <property type="match status" value="1"/>
</dbReference>
<dbReference type="PROSITE" id="PS50162">
    <property type="entry name" value="RECA_2"/>
    <property type="match status" value="1"/>
</dbReference>
<dbReference type="PROSITE" id="PS50163">
    <property type="entry name" value="RECA_3"/>
    <property type="match status" value="1"/>
</dbReference>
<evidence type="ECO:0000255" key="1">
    <source>
        <dbReference type="HAMAP-Rule" id="MF_00268"/>
    </source>
</evidence>
<evidence type="ECO:0000256" key="2">
    <source>
        <dbReference type="SAM" id="MobiDB-lite"/>
    </source>
</evidence>
<sequence>MAIDENKQKALAAALGQIEKQFGKGSIMRLGEDRSMDVETISTGSLSLDIALGAGGLPMGRIVEIYGPESSGKTTLTLQVIAAAQREGKTCAFIDAEHALDPIYARKLGVDIDNLLCSQPDTGEQALEICDALARSGAVDVIVVDSVAALTPKAEIEGEIGDSHMGLAARMMSQAMRKLAGNLKQSNTLLIFINQIRMKIGVMFGNPETTTGGNALKFYASVRLDIRRIGAVKEGENVVGSETRVKVVKNKIAAPFKQAEFQILYGEGINFYGELVDLGVKEKLIEKAGAWYSYKGEKIGQGKANATAWLKDNPETAKEIEKKVRELLLSNPNSTPDFSVDDSEGVAETNEDF</sequence>
<organism>
    <name type="scientific">Escherichia coli O9:H4 (strain HS)</name>
    <dbReference type="NCBI Taxonomy" id="331112"/>
    <lineage>
        <taxon>Bacteria</taxon>
        <taxon>Pseudomonadati</taxon>
        <taxon>Pseudomonadota</taxon>
        <taxon>Gammaproteobacteria</taxon>
        <taxon>Enterobacterales</taxon>
        <taxon>Enterobacteriaceae</taxon>
        <taxon>Escherichia</taxon>
    </lineage>
</organism>